<evidence type="ECO:0000305" key="1"/>
<proteinExistence type="evidence at transcript level"/>
<sequence length="249" mass="27919">MAADESPASPSELSECFSAEDYAAESLAADLDPWITFDARKTPRAEFSSWLQSHRPSSVSRYGDGEAGAGPVGWIAVRGPDYSEQSGDVEGLQDSWETLLTSGRSVSFQNIRELALNHSVLDGKWLMHLDTGFKVDRAWESIARATVLEGKIWSAKVSPRDPSSNSRHVICVYNQNFTDEEQVVRLDSAIRAAGVKCVLYYKPDVYTYLGIYRNNRWKLCPTIYESMFDLESVPRRSHILNKVTNLELS</sequence>
<comment type="similarity">
    <text evidence="1">Belongs to the UPF0696 family.</text>
</comment>
<gene>
    <name type="ORF">P5436</name>
    <name type="ORF">zgc:63470</name>
</gene>
<keyword id="KW-1185">Reference proteome</keyword>
<name>CK068_DANRE</name>
<dbReference type="EMBL" id="AY398392">
    <property type="protein sequence ID" value="AAQ97825.1"/>
    <property type="molecule type" value="mRNA"/>
</dbReference>
<dbReference type="EMBL" id="BC055119">
    <property type="protein sequence ID" value="AAH55119.1"/>
    <property type="molecule type" value="mRNA"/>
</dbReference>
<dbReference type="EMBL" id="BC067593">
    <property type="protein sequence ID" value="AAH67593.1"/>
    <property type="molecule type" value="mRNA"/>
</dbReference>
<dbReference type="RefSeq" id="NP_956742.2">
    <property type="nucleotide sequence ID" value="NM_200448.2"/>
</dbReference>
<dbReference type="SMR" id="Q6NWH0"/>
<dbReference type="FunCoup" id="Q6NWH0">
    <property type="interactions" value="306"/>
</dbReference>
<dbReference type="PaxDb" id="7955-ENSDARP00000126646"/>
<dbReference type="Ensembl" id="ENSDART00000152224">
    <property type="protein sequence ID" value="ENSDARP00000126646"/>
    <property type="gene ID" value="ENSDARG00000019406"/>
</dbReference>
<dbReference type="GeneID" id="393420"/>
<dbReference type="KEGG" id="dre:393420"/>
<dbReference type="AGR" id="ZFIN:ZDB-GENE-040426-1126"/>
<dbReference type="ZFIN" id="ZDB-GENE-040426-1126">
    <property type="gene designation" value="zgc:63470"/>
</dbReference>
<dbReference type="eggNOG" id="ENOG502QRQJ">
    <property type="taxonomic scope" value="Eukaryota"/>
</dbReference>
<dbReference type="HOGENOM" id="CLU_051869_1_0_1"/>
<dbReference type="InParanoid" id="Q6NWH0"/>
<dbReference type="OMA" id="WIAIYGP"/>
<dbReference type="OrthoDB" id="10067381at2759"/>
<dbReference type="PRO" id="PR:Q6NWH0"/>
<dbReference type="Proteomes" id="UP000000437">
    <property type="component" value="Chromosome 7"/>
</dbReference>
<dbReference type="Bgee" id="ENSDARG00000019406">
    <property type="expression patterns" value="Expressed in mature ovarian follicle and 20 other cell types or tissues"/>
</dbReference>
<dbReference type="Gene3D" id="3.30.760.10">
    <property type="entry name" value="RNA Cap, Translation Initiation Factor Eif4e"/>
    <property type="match status" value="1"/>
</dbReference>
<dbReference type="InterPro" id="IPR015034">
    <property type="entry name" value="Bles03"/>
</dbReference>
<dbReference type="InterPro" id="IPR023398">
    <property type="entry name" value="TIF_eIF4e-like"/>
</dbReference>
<dbReference type="PANTHER" id="PTHR31977">
    <property type="entry name" value="UPF0696 PROTEIN C11ORF68"/>
    <property type="match status" value="1"/>
</dbReference>
<dbReference type="PANTHER" id="PTHR31977:SF1">
    <property type="entry name" value="UPF0696 PROTEIN C11ORF68"/>
    <property type="match status" value="1"/>
</dbReference>
<dbReference type="Pfam" id="PF08939">
    <property type="entry name" value="Bles03"/>
    <property type="match status" value="1"/>
</dbReference>
<dbReference type="SUPFAM" id="SSF55418">
    <property type="entry name" value="eIF4e-like"/>
    <property type="match status" value="1"/>
</dbReference>
<reference key="1">
    <citation type="journal article" date="2004" name="Proc. Natl. Acad. Sci. U.S.A.">
        <title>Hematopoietic gene expression profile in zebrafish kidney marrow.</title>
        <authorList>
            <person name="Song H.-D."/>
            <person name="Sun X.-J."/>
            <person name="Deng M."/>
            <person name="Zhang G.-W."/>
            <person name="Zhou Y."/>
            <person name="Wu X.-Y."/>
            <person name="Sheng Y."/>
            <person name="Chen Y."/>
            <person name="Ruan Z."/>
            <person name="Jiang C.-L."/>
            <person name="Fan H.-Y."/>
            <person name="Zon L.I."/>
            <person name="Kanki J.P."/>
            <person name="Liu T.X."/>
            <person name="Look A.T."/>
            <person name="Chen Z."/>
        </authorList>
    </citation>
    <scope>NUCLEOTIDE SEQUENCE [LARGE SCALE MRNA]</scope>
    <source>
        <tissue>Kidney marrow</tissue>
    </source>
</reference>
<reference key="2">
    <citation type="submission" date="2004-03" db="EMBL/GenBank/DDBJ databases">
        <authorList>
            <consortium name="NIH - Zebrafish Gene Collection (ZGC) project"/>
        </authorList>
    </citation>
    <scope>NUCLEOTIDE SEQUENCE [LARGE SCALE MRNA]</scope>
    <source>
        <strain>AB</strain>
        <tissue>Embryo</tissue>
    </source>
</reference>
<feature type="chain" id="PRO_0000359890" description="UPF0696 protein C11orf68 homolog">
    <location>
        <begin position="1"/>
        <end position="249"/>
    </location>
</feature>
<feature type="sequence conflict" description="In Ref. 2; AAH55119." evidence="1" ref="2">
    <original>A</original>
    <variation>V</variation>
    <location>
        <position position="8"/>
    </location>
</feature>
<feature type="sequence conflict" description="In Ref. 2; AAH55119." evidence="1" ref="2">
    <original>G</original>
    <variation>S</variation>
    <location>
        <position position="68"/>
    </location>
</feature>
<accession>Q6NWH0</accession>
<accession>Q7SY57</accession>
<organism>
    <name type="scientific">Danio rerio</name>
    <name type="common">Zebrafish</name>
    <name type="synonym">Brachydanio rerio</name>
    <dbReference type="NCBI Taxonomy" id="7955"/>
    <lineage>
        <taxon>Eukaryota</taxon>
        <taxon>Metazoa</taxon>
        <taxon>Chordata</taxon>
        <taxon>Craniata</taxon>
        <taxon>Vertebrata</taxon>
        <taxon>Euteleostomi</taxon>
        <taxon>Actinopterygii</taxon>
        <taxon>Neopterygii</taxon>
        <taxon>Teleostei</taxon>
        <taxon>Ostariophysi</taxon>
        <taxon>Cypriniformes</taxon>
        <taxon>Danionidae</taxon>
        <taxon>Danioninae</taxon>
        <taxon>Danio</taxon>
    </lineage>
</organism>
<protein>
    <recommendedName>
        <fullName>UPF0696 protein C11orf68 homolog</fullName>
    </recommendedName>
</protein>